<dbReference type="EMBL" id="AF284694">
    <property type="protein sequence ID" value="AAG32308.1"/>
    <property type="molecule type" value="Genomic_DNA"/>
</dbReference>
<dbReference type="SMR" id="Q9GDV2"/>
<dbReference type="GO" id="GO:0009535">
    <property type="term" value="C:chloroplast thylakoid membrane"/>
    <property type="evidence" value="ECO:0007669"/>
    <property type="project" value="UniProtKB-SubCell"/>
</dbReference>
<dbReference type="GO" id="GO:0009522">
    <property type="term" value="C:photosystem I"/>
    <property type="evidence" value="ECO:0007669"/>
    <property type="project" value="UniProtKB-KW"/>
</dbReference>
<dbReference type="GO" id="GO:0015979">
    <property type="term" value="P:photosynthesis"/>
    <property type="evidence" value="ECO:0007669"/>
    <property type="project" value="UniProtKB-UniRule"/>
</dbReference>
<dbReference type="HAMAP" id="MF_00431">
    <property type="entry name" value="PSI_PsaI"/>
    <property type="match status" value="1"/>
</dbReference>
<dbReference type="InterPro" id="IPR001302">
    <property type="entry name" value="PSI_PsaI"/>
</dbReference>
<dbReference type="InterPro" id="IPR036357">
    <property type="entry name" value="PSI_PsaI_sf"/>
</dbReference>
<dbReference type="NCBIfam" id="TIGR03052">
    <property type="entry name" value="PS_I_psaI"/>
    <property type="match status" value="1"/>
</dbReference>
<dbReference type="PANTHER" id="PTHR35775">
    <property type="match status" value="1"/>
</dbReference>
<dbReference type="PANTHER" id="PTHR35775:SF2">
    <property type="entry name" value="PHOTOSYSTEM I REACTION CENTER SUBUNIT VIII"/>
    <property type="match status" value="1"/>
</dbReference>
<dbReference type="Pfam" id="PF00796">
    <property type="entry name" value="PSI_8"/>
    <property type="match status" value="1"/>
</dbReference>
<dbReference type="SUPFAM" id="SSF81540">
    <property type="entry name" value="Subunit VIII of photosystem I reaction centre, PsaI"/>
    <property type="match status" value="1"/>
</dbReference>
<accession>Q9GDV2</accession>
<feature type="chain" id="PRO_0000194647" description="Photosystem I reaction center subunit VIII">
    <location>
        <begin position="1"/>
        <end position="36"/>
    </location>
</feature>
<feature type="transmembrane region" description="Helical" evidence="2">
    <location>
        <begin position="10"/>
        <end position="30"/>
    </location>
</feature>
<evidence type="ECO:0000250" key="1"/>
<evidence type="ECO:0000255" key="2"/>
<evidence type="ECO:0000305" key="3"/>
<gene>
    <name type="primary">psaI</name>
</gene>
<keyword id="KW-0150">Chloroplast</keyword>
<keyword id="KW-0472">Membrane</keyword>
<keyword id="KW-0602">Photosynthesis</keyword>
<keyword id="KW-0603">Photosystem I</keyword>
<keyword id="KW-0934">Plastid</keyword>
<keyword id="KW-0793">Thylakoid</keyword>
<keyword id="KW-0812">Transmembrane</keyword>
<keyword id="KW-1133">Transmembrane helix</keyword>
<protein>
    <recommendedName>
        <fullName>Photosystem I reaction center subunit VIII</fullName>
        <shortName>PSI-I</shortName>
    </recommendedName>
</protein>
<organism>
    <name type="scientific">Carpobrotus chilensis</name>
    <name type="common">Sea fig</name>
    <name type="synonym">Mesembryanthemum chilense</name>
    <dbReference type="NCBI Taxonomy" id="142000"/>
    <lineage>
        <taxon>Eukaryota</taxon>
        <taxon>Viridiplantae</taxon>
        <taxon>Streptophyta</taxon>
        <taxon>Embryophyta</taxon>
        <taxon>Tracheophyta</taxon>
        <taxon>Spermatophyta</taxon>
        <taxon>Magnoliopsida</taxon>
        <taxon>eudicotyledons</taxon>
        <taxon>Gunneridae</taxon>
        <taxon>Pentapetalae</taxon>
        <taxon>Caryophyllales</taxon>
        <taxon>Aizoaceae</taxon>
        <taxon>Carpobrotus</taxon>
    </lineage>
</organism>
<comment type="function">
    <text evidence="1">May help in the organization of the PsaL subunit.</text>
</comment>
<comment type="subcellular location">
    <subcellularLocation>
        <location evidence="1">Plastid</location>
        <location evidence="1">Chloroplast thylakoid membrane</location>
        <topology evidence="1">Single-pass membrane protein</topology>
    </subcellularLocation>
</comment>
<comment type="similarity">
    <text evidence="3">Belongs to the PsaI family.</text>
</comment>
<name>PSAI_CARCL</name>
<proteinExistence type="inferred from homology"/>
<geneLocation type="chloroplast"/>
<reference key="1">
    <citation type="submission" date="2000-07" db="EMBL/GenBank/DDBJ databases">
        <title>Population genetic analysis of California Carpobrotus.</title>
        <authorList>
            <person name="Schierenbeck K."/>
            <person name="Symonds V."/>
            <person name="Bell J.R."/>
        </authorList>
    </citation>
    <scope>NUCLEOTIDE SEQUENCE [GENOMIC DNA]</scope>
</reference>
<sequence length="36" mass="3998">MTTINFPSLFVPLVGLIFPAIAMASLFLYVQKNKIV</sequence>